<evidence type="ECO:0000255" key="1">
    <source>
        <dbReference type="HAMAP-Rule" id="MF_00462"/>
    </source>
</evidence>
<keyword id="KW-0997">Cell inner membrane</keyword>
<keyword id="KW-1003">Cell membrane</keyword>
<keyword id="KW-0249">Electron transport</keyword>
<keyword id="KW-0285">Flavoprotein</keyword>
<keyword id="KW-0288">FMN</keyword>
<keyword id="KW-0472">Membrane</keyword>
<keyword id="KW-0597">Phosphoprotein</keyword>
<keyword id="KW-1278">Translocase</keyword>
<keyword id="KW-0812">Transmembrane</keyword>
<keyword id="KW-1133">Transmembrane helix</keyword>
<keyword id="KW-0813">Transport</keyword>
<name>RSXD_SALCH</name>
<reference key="1">
    <citation type="journal article" date="2005" name="Nucleic Acids Res.">
        <title>The genome sequence of Salmonella enterica serovar Choleraesuis, a highly invasive and resistant zoonotic pathogen.</title>
        <authorList>
            <person name="Chiu C.-H."/>
            <person name="Tang P."/>
            <person name="Chu C."/>
            <person name="Hu S."/>
            <person name="Bao Q."/>
            <person name="Yu J."/>
            <person name="Chou Y.-Y."/>
            <person name="Wang H.-S."/>
            <person name="Lee Y.-S."/>
        </authorList>
    </citation>
    <scope>NUCLEOTIDE SEQUENCE [LARGE SCALE GENOMIC DNA]</scope>
    <source>
        <strain>SC-B67</strain>
    </source>
</reference>
<dbReference type="EC" id="7.-.-.-" evidence="1"/>
<dbReference type="EMBL" id="AE017220">
    <property type="protein sequence ID" value="AAX65380.1"/>
    <property type="molecule type" value="Genomic_DNA"/>
</dbReference>
<dbReference type="RefSeq" id="WP_000231891.1">
    <property type="nucleotide sequence ID" value="NC_006905.1"/>
</dbReference>
<dbReference type="SMR" id="Q57PI1"/>
<dbReference type="KEGG" id="sec:SCH_1474"/>
<dbReference type="HOGENOM" id="CLU_042020_0_0_6"/>
<dbReference type="Proteomes" id="UP000000538">
    <property type="component" value="Chromosome"/>
</dbReference>
<dbReference type="GO" id="GO:0005886">
    <property type="term" value="C:plasma membrane"/>
    <property type="evidence" value="ECO:0007669"/>
    <property type="project" value="UniProtKB-SubCell"/>
</dbReference>
<dbReference type="GO" id="GO:0022900">
    <property type="term" value="P:electron transport chain"/>
    <property type="evidence" value="ECO:0007669"/>
    <property type="project" value="UniProtKB-UniRule"/>
</dbReference>
<dbReference type="GO" id="GO:0055085">
    <property type="term" value="P:transmembrane transport"/>
    <property type="evidence" value="ECO:0007669"/>
    <property type="project" value="InterPro"/>
</dbReference>
<dbReference type="HAMAP" id="MF_00462">
    <property type="entry name" value="RsxD_RnfD"/>
    <property type="match status" value="1"/>
</dbReference>
<dbReference type="InterPro" id="IPR004338">
    <property type="entry name" value="NqrB/RnfD"/>
</dbReference>
<dbReference type="InterPro" id="IPR011303">
    <property type="entry name" value="RnfD_bac"/>
</dbReference>
<dbReference type="NCBIfam" id="NF002011">
    <property type="entry name" value="PRK00816.1"/>
    <property type="match status" value="1"/>
</dbReference>
<dbReference type="NCBIfam" id="TIGR01946">
    <property type="entry name" value="rnfD"/>
    <property type="match status" value="1"/>
</dbReference>
<dbReference type="PANTHER" id="PTHR30578">
    <property type="entry name" value="ELECTRON TRANSPORT COMPLEX PROTEIN RNFD"/>
    <property type="match status" value="1"/>
</dbReference>
<dbReference type="PANTHER" id="PTHR30578:SF0">
    <property type="entry name" value="ION-TRANSLOCATING OXIDOREDUCTASE COMPLEX SUBUNIT D"/>
    <property type="match status" value="1"/>
</dbReference>
<dbReference type="Pfam" id="PF03116">
    <property type="entry name" value="NQR2_RnfD_RnfE"/>
    <property type="match status" value="1"/>
</dbReference>
<feature type="chain" id="PRO_1000081151" description="Ion-translocating oxidoreductase complex subunit D">
    <location>
        <begin position="1"/>
        <end position="352"/>
    </location>
</feature>
<feature type="transmembrane region" description="Helical" evidence="1">
    <location>
        <begin position="20"/>
        <end position="40"/>
    </location>
</feature>
<feature type="transmembrane region" description="Helical" evidence="1">
    <location>
        <begin position="42"/>
        <end position="62"/>
    </location>
</feature>
<feature type="transmembrane region" description="Helical" evidence="1">
    <location>
        <begin position="69"/>
        <end position="91"/>
    </location>
</feature>
<feature type="transmembrane region" description="Helical" evidence="1">
    <location>
        <begin position="123"/>
        <end position="143"/>
    </location>
</feature>
<feature type="transmembrane region" description="Helical" evidence="1">
    <location>
        <begin position="215"/>
        <end position="235"/>
    </location>
</feature>
<feature type="transmembrane region" description="Helical" evidence="1">
    <location>
        <begin position="242"/>
        <end position="262"/>
    </location>
</feature>
<feature type="transmembrane region" description="Helical" evidence="1">
    <location>
        <begin position="267"/>
        <end position="287"/>
    </location>
</feature>
<feature type="transmembrane region" description="Helical" evidence="1">
    <location>
        <begin position="301"/>
        <end position="321"/>
    </location>
</feature>
<feature type="transmembrane region" description="Helical" evidence="1">
    <location>
        <begin position="322"/>
        <end position="342"/>
    </location>
</feature>
<feature type="modified residue" description="FMN phosphoryl threonine" evidence="1">
    <location>
        <position position="187"/>
    </location>
</feature>
<comment type="function">
    <text evidence="1">Part of a membrane-bound complex that couples electron transfer with translocation of ions across the membrane. Required to maintain the reduced state of SoxR.</text>
</comment>
<comment type="cofactor">
    <cofactor evidence="1">
        <name>FMN</name>
        <dbReference type="ChEBI" id="CHEBI:58210"/>
    </cofactor>
</comment>
<comment type="subunit">
    <text evidence="1">The complex is composed of six subunits: RsxA, RsxB, RsxC, RsxD, RsxE and RsxG.</text>
</comment>
<comment type="subcellular location">
    <subcellularLocation>
        <location evidence="1">Cell inner membrane</location>
        <topology evidence="1">Multi-pass membrane protein</topology>
    </subcellularLocation>
</comment>
<comment type="similarity">
    <text evidence="1">Belongs to the NqrB/RnfD family.</text>
</comment>
<organism>
    <name type="scientific">Salmonella choleraesuis (strain SC-B67)</name>
    <dbReference type="NCBI Taxonomy" id="321314"/>
    <lineage>
        <taxon>Bacteria</taxon>
        <taxon>Pseudomonadati</taxon>
        <taxon>Pseudomonadota</taxon>
        <taxon>Gammaproteobacteria</taxon>
        <taxon>Enterobacterales</taxon>
        <taxon>Enterobacteriaceae</taxon>
        <taxon>Salmonella</taxon>
    </lineage>
</organism>
<gene>
    <name evidence="1" type="primary">rsxD</name>
    <name type="synonym">rnfD</name>
    <name type="ordered locus">SCH_1474</name>
</gene>
<proteinExistence type="inferred from homology"/>
<accession>Q57PI1</accession>
<sequence>MVFRIASSPYTHNQRQTSRIMLLVLIAALPGIAAQTWFFGWGTLFQIVLAAITALVAEAIVLRLRKQSVASHLQDYSALLTGLLLAVSIPPLAPWWMVVLGTGFAIIIAKQLYGGLGQNPFNPAMIGYVVLLISFPVQMTSWLPPYEIAATTPDMLDTLRMIFTGHTASGGDMTLLRIGIDGISQATPLDTFKTSLRAGHSVEQIMQYPIYSGALAGVGWQWVNLAWLVGGVFLLWQKAIRWHIPVSFLLTLALCAALGWLFSPATLASPQLHLLSGATMLGAFFILTDPVTASTTNRGRLIFGALAGVLVWLIRSFGGYPDGVAFAVLLANITVPLIDYYTRPRVYGHRKG</sequence>
<protein>
    <recommendedName>
        <fullName evidence="1">Ion-translocating oxidoreductase complex subunit D</fullName>
        <ecNumber evidence="1">7.-.-.-</ecNumber>
    </recommendedName>
    <alternativeName>
        <fullName evidence="1">Rsx electron transport complex subunit D</fullName>
    </alternativeName>
</protein>